<feature type="chain" id="PRO_1000196081" description="Large ribosomal subunit protein bL34">
    <location>
        <begin position="1"/>
        <end position="44"/>
    </location>
</feature>
<gene>
    <name evidence="1" type="primary">rpmH</name>
    <name type="ordered locus">OTT_1383</name>
</gene>
<accession>B3CTZ4</accession>
<organism>
    <name type="scientific">Orientia tsutsugamushi (strain Ikeda)</name>
    <name type="common">Rickettsia tsutsugamushi</name>
    <dbReference type="NCBI Taxonomy" id="334380"/>
    <lineage>
        <taxon>Bacteria</taxon>
        <taxon>Pseudomonadati</taxon>
        <taxon>Pseudomonadota</taxon>
        <taxon>Alphaproteobacteria</taxon>
        <taxon>Rickettsiales</taxon>
        <taxon>Rickettsiaceae</taxon>
        <taxon>Rickettsieae</taxon>
        <taxon>Orientia</taxon>
    </lineage>
</organism>
<reference key="1">
    <citation type="journal article" date="2008" name="DNA Res.">
        <title>The whole-genome sequencing of the obligate intracellular bacterium Orientia tsutsugamushi revealed massive gene amplification during reductive genome evolution.</title>
        <authorList>
            <person name="Nakayama K."/>
            <person name="Yamashita A."/>
            <person name="Kurokawa K."/>
            <person name="Morimoto T."/>
            <person name="Ogawa M."/>
            <person name="Fukuhara M."/>
            <person name="Urakami H."/>
            <person name="Ohnishi M."/>
            <person name="Uchiyama I."/>
            <person name="Ogura Y."/>
            <person name="Ooka T."/>
            <person name="Oshima K."/>
            <person name="Tamura A."/>
            <person name="Hattori M."/>
            <person name="Hayashi T."/>
        </authorList>
    </citation>
    <scope>NUCLEOTIDE SEQUENCE [LARGE SCALE GENOMIC DNA]</scope>
    <source>
        <strain>Ikeda</strain>
    </source>
</reference>
<comment type="similarity">
    <text evidence="1">Belongs to the bacterial ribosomal protein bL34 family.</text>
</comment>
<name>RL34_ORITI</name>
<dbReference type="EMBL" id="AP008981">
    <property type="protein sequence ID" value="BAG40841.1"/>
    <property type="molecule type" value="Genomic_DNA"/>
</dbReference>
<dbReference type="SMR" id="B3CTZ4"/>
<dbReference type="KEGG" id="ott:OTT_1383"/>
<dbReference type="HOGENOM" id="CLU_129938_2_0_5"/>
<dbReference type="Proteomes" id="UP000001033">
    <property type="component" value="Chromosome"/>
</dbReference>
<dbReference type="GO" id="GO:1990904">
    <property type="term" value="C:ribonucleoprotein complex"/>
    <property type="evidence" value="ECO:0007669"/>
    <property type="project" value="UniProtKB-KW"/>
</dbReference>
<dbReference type="GO" id="GO:0005840">
    <property type="term" value="C:ribosome"/>
    <property type="evidence" value="ECO:0007669"/>
    <property type="project" value="UniProtKB-KW"/>
</dbReference>
<dbReference type="GO" id="GO:0003735">
    <property type="term" value="F:structural constituent of ribosome"/>
    <property type="evidence" value="ECO:0007669"/>
    <property type="project" value="InterPro"/>
</dbReference>
<dbReference type="GO" id="GO:0006412">
    <property type="term" value="P:translation"/>
    <property type="evidence" value="ECO:0007669"/>
    <property type="project" value="UniProtKB-UniRule"/>
</dbReference>
<dbReference type="FunFam" id="1.10.287.3980:FF:000001">
    <property type="entry name" value="Mitochondrial ribosomal protein L34"/>
    <property type="match status" value="1"/>
</dbReference>
<dbReference type="Gene3D" id="1.10.287.3980">
    <property type="match status" value="1"/>
</dbReference>
<dbReference type="HAMAP" id="MF_00391">
    <property type="entry name" value="Ribosomal_bL34"/>
    <property type="match status" value="1"/>
</dbReference>
<dbReference type="InterPro" id="IPR000271">
    <property type="entry name" value="Ribosomal_bL34"/>
</dbReference>
<dbReference type="InterPro" id="IPR020939">
    <property type="entry name" value="Ribosomal_bL34_CS"/>
</dbReference>
<dbReference type="NCBIfam" id="TIGR01030">
    <property type="entry name" value="rpmH_bact"/>
    <property type="match status" value="1"/>
</dbReference>
<dbReference type="PANTHER" id="PTHR14503:SF4">
    <property type="entry name" value="LARGE RIBOSOMAL SUBUNIT PROTEIN BL34M"/>
    <property type="match status" value="1"/>
</dbReference>
<dbReference type="PANTHER" id="PTHR14503">
    <property type="entry name" value="MITOCHONDRIAL RIBOSOMAL PROTEIN 34 FAMILY MEMBER"/>
    <property type="match status" value="1"/>
</dbReference>
<dbReference type="Pfam" id="PF00468">
    <property type="entry name" value="Ribosomal_L34"/>
    <property type="match status" value="1"/>
</dbReference>
<dbReference type="PROSITE" id="PS00784">
    <property type="entry name" value="RIBOSOMAL_L34"/>
    <property type="match status" value="1"/>
</dbReference>
<sequence length="44" mass="5347">MKRTYQPSKLVRKRRHGFMERMSSVGGRRVLMRRRMKGRRVLSA</sequence>
<evidence type="ECO:0000255" key="1">
    <source>
        <dbReference type="HAMAP-Rule" id="MF_00391"/>
    </source>
</evidence>
<evidence type="ECO:0000305" key="2"/>
<protein>
    <recommendedName>
        <fullName evidence="1">Large ribosomal subunit protein bL34</fullName>
    </recommendedName>
    <alternativeName>
        <fullName evidence="2">50S ribosomal protein L34</fullName>
    </alternativeName>
</protein>
<keyword id="KW-0687">Ribonucleoprotein</keyword>
<keyword id="KW-0689">Ribosomal protein</keyword>
<proteinExistence type="inferred from homology"/>